<comment type="function">
    <text evidence="1">This is one of the proteins that bind and probably mediate the attachment of the 5S RNA into the large ribosomal subunit, where it forms part of the central protuberance. In the 70S ribosome it contacts protein S13 of the 30S subunit (bridge B1b), connecting the 2 subunits; this bridge is implicated in subunit movement. Contacts the P site tRNA; the 5S rRNA and some of its associated proteins might help stabilize positioning of ribosome-bound tRNAs.</text>
</comment>
<comment type="subunit">
    <text evidence="1">Part of the 50S ribosomal subunit; part of the 5S rRNA/L5/L18/L25 subcomplex. Contacts the 5S rRNA and the P site tRNA. Forms a bridge to the 30S subunit in the 70S ribosome.</text>
</comment>
<comment type="similarity">
    <text evidence="1">Belongs to the universal ribosomal protein uL5 family.</text>
</comment>
<protein>
    <recommendedName>
        <fullName evidence="1">Large ribosomal subunit protein uL5</fullName>
    </recommendedName>
    <alternativeName>
        <fullName evidence="2">50S ribosomal protein L5</fullName>
    </alternativeName>
</protein>
<dbReference type="EMBL" id="CP000143">
    <property type="protein sequence ID" value="ABA77874.1"/>
    <property type="molecule type" value="Genomic_DNA"/>
</dbReference>
<dbReference type="RefSeq" id="WP_011336952.1">
    <property type="nucleotide sequence ID" value="NZ_CP030271.1"/>
</dbReference>
<dbReference type="RefSeq" id="YP_351775.1">
    <property type="nucleotide sequence ID" value="NC_007493.2"/>
</dbReference>
<dbReference type="SMR" id="Q3J5R0"/>
<dbReference type="STRING" id="272943.RSP_1727"/>
<dbReference type="EnsemblBacteria" id="ABA77874">
    <property type="protein sequence ID" value="ABA77874"/>
    <property type="gene ID" value="RSP_1727"/>
</dbReference>
<dbReference type="GeneID" id="67445512"/>
<dbReference type="KEGG" id="rsp:RSP_1727"/>
<dbReference type="PATRIC" id="fig|272943.9.peg.605"/>
<dbReference type="eggNOG" id="COG0094">
    <property type="taxonomic scope" value="Bacteria"/>
</dbReference>
<dbReference type="OrthoDB" id="9806626at2"/>
<dbReference type="PhylomeDB" id="Q3J5R0"/>
<dbReference type="Proteomes" id="UP000002703">
    <property type="component" value="Chromosome 1"/>
</dbReference>
<dbReference type="GO" id="GO:1990904">
    <property type="term" value="C:ribonucleoprotein complex"/>
    <property type="evidence" value="ECO:0007669"/>
    <property type="project" value="UniProtKB-KW"/>
</dbReference>
<dbReference type="GO" id="GO:0005840">
    <property type="term" value="C:ribosome"/>
    <property type="evidence" value="ECO:0007669"/>
    <property type="project" value="UniProtKB-KW"/>
</dbReference>
<dbReference type="GO" id="GO:0019843">
    <property type="term" value="F:rRNA binding"/>
    <property type="evidence" value="ECO:0007669"/>
    <property type="project" value="UniProtKB-UniRule"/>
</dbReference>
<dbReference type="GO" id="GO:0003735">
    <property type="term" value="F:structural constituent of ribosome"/>
    <property type="evidence" value="ECO:0007669"/>
    <property type="project" value="InterPro"/>
</dbReference>
<dbReference type="GO" id="GO:0000049">
    <property type="term" value="F:tRNA binding"/>
    <property type="evidence" value="ECO:0007669"/>
    <property type="project" value="UniProtKB-UniRule"/>
</dbReference>
<dbReference type="GO" id="GO:0006412">
    <property type="term" value="P:translation"/>
    <property type="evidence" value="ECO:0007669"/>
    <property type="project" value="UniProtKB-UniRule"/>
</dbReference>
<dbReference type="FunFam" id="3.30.1440.10:FF:000001">
    <property type="entry name" value="50S ribosomal protein L5"/>
    <property type="match status" value="1"/>
</dbReference>
<dbReference type="Gene3D" id="3.30.1440.10">
    <property type="match status" value="1"/>
</dbReference>
<dbReference type="HAMAP" id="MF_01333_B">
    <property type="entry name" value="Ribosomal_uL5_B"/>
    <property type="match status" value="1"/>
</dbReference>
<dbReference type="InterPro" id="IPR002132">
    <property type="entry name" value="Ribosomal_uL5"/>
</dbReference>
<dbReference type="InterPro" id="IPR020930">
    <property type="entry name" value="Ribosomal_uL5_bac-type"/>
</dbReference>
<dbReference type="InterPro" id="IPR031309">
    <property type="entry name" value="Ribosomal_uL5_C"/>
</dbReference>
<dbReference type="InterPro" id="IPR020929">
    <property type="entry name" value="Ribosomal_uL5_CS"/>
</dbReference>
<dbReference type="InterPro" id="IPR022803">
    <property type="entry name" value="Ribosomal_uL5_dom_sf"/>
</dbReference>
<dbReference type="InterPro" id="IPR031310">
    <property type="entry name" value="Ribosomal_uL5_N"/>
</dbReference>
<dbReference type="NCBIfam" id="NF000585">
    <property type="entry name" value="PRK00010.1"/>
    <property type="match status" value="1"/>
</dbReference>
<dbReference type="PANTHER" id="PTHR11994">
    <property type="entry name" value="60S RIBOSOMAL PROTEIN L11-RELATED"/>
    <property type="match status" value="1"/>
</dbReference>
<dbReference type="Pfam" id="PF00281">
    <property type="entry name" value="Ribosomal_L5"/>
    <property type="match status" value="1"/>
</dbReference>
<dbReference type="Pfam" id="PF00673">
    <property type="entry name" value="Ribosomal_L5_C"/>
    <property type="match status" value="1"/>
</dbReference>
<dbReference type="PIRSF" id="PIRSF002161">
    <property type="entry name" value="Ribosomal_L5"/>
    <property type="match status" value="1"/>
</dbReference>
<dbReference type="SUPFAM" id="SSF55282">
    <property type="entry name" value="RL5-like"/>
    <property type="match status" value="1"/>
</dbReference>
<dbReference type="PROSITE" id="PS00358">
    <property type="entry name" value="RIBOSOMAL_L5"/>
    <property type="match status" value="1"/>
</dbReference>
<sequence>MLDQTNYTPRLKAAYANSVRAAMKEEFGYKNDMQIPRLDKIVLNMGVGEAVKDTKKVKTAAEELSMIAGQKAVVTHAKKSIAGFRVREQMPLGCKVTLRGDRMYEFLDRLITIALPRVRDFRGVKGNSFDGRGNYAMGLKEQFVFPEINFDKVDEVLGMDIIICTTAKTDAEAKALLKQFNMPFIS</sequence>
<feature type="chain" id="PRO_0000243050" description="Large ribosomal subunit protein uL5">
    <location>
        <begin position="1"/>
        <end position="186"/>
    </location>
</feature>
<gene>
    <name evidence="1" type="primary">rplE</name>
    <name type="ordered locus">RHOS4_03060</name>
    <name type="ORF">RSP_1727</name>
</gene>
<evidence type="ECO:0000255" key="1">
    <source>
        <dbReference type="HAMAP-Rule" id="MF_01333"/>
    </source>
</evidence>
<evidence type="ECO:0000305" key="2"/>
<accession>Q3J5R0</accession>
<proteinExistence type="inferred from homology"/>
<keyword id="KW-1185">Reference proteome</keyword>
<keyword id="KW-0687">Ribonucleoprotein</keyword>
<keyword id="KW-0689">Ribosomal protein</keyword>
<keyword id="KW-0694">RNA-binding</keyword>
<keyword id="KW-0699">rRNA-binding</keyword>
<keyword id="KW-0820">tRNA-binding</keyword>
<name>RL5_CERS4</name>
<organism>
    <name type="scientific">Cereibacter sphaeroides (strain ATCC 17023 / DSM 158 / JCM 6121 / CCUG 31486 / LMG 2827 / NBRC 12203 / NCIMB 8253 / ATH 2.4.1.)</name>
    <name type="common">Rhodobacter sphaeroides</name>
    <dbReference type="NCBI Taxonomy" id="272943"/>
    <lineage>
        <taxon>Bacteria</taxon>
        <taxon>Pseudomonadati</taxon>
        <taxon>Pseudomonadota</taxon>
        <taxon>Alphaproteobacteria</taxon>
        <taxon>Rhodobacterales</taxon>
        <taxon>Paracoccaceae</taxon>
        <taxon>Cereibacter</taxon>
    </lineage>
</organism>
<reference key="1">
    <citation type="submission" date="2005-09" db="EMBL/GenBank/DDBJ databases">
        <title>Complete sequence of chromosome 1 of Rhodobacter sphaeroides 2.4.1.</title>
        <authorList>
            <person name="Copeland A."/>
            <person name="Lucas S."/>
            <person name="Lapidus A."/>
            <person name="Barry K."/>
            <person name="Detter J.C."/>
            <person name="Glavina T."/>
            <person name="Hammon N."/>
            <person name="Israni S."/>
            <person name="Pitluck S."/>
            <person name="Richardson P."/>
            <person name="Mackenzie C."/>
            <person name="Choudhary M."/>
            <person name="Larimer F."/>
            <person name="Hauser L.J."/>
            <person name="Land M."/>
            <person name="Donohue T.J."/>
            <person name="Kaplan S."/>
        </authorList>
    </citation>
    <scope>NUCLEOTIDE SEQUENCE [LARGE SCALE GENOMIC DNA]</scope>
    <source>
        <strain>ATCC 17023 / DSM 158 / JCM 6121 / CCUG 31486 / LMG 2827 / NBRC 12203 / NCIMB 8253 / ATH 2.4.1.</strain>
    </source>
</reference>